<proteinExistence type="evidence at protein level"/>
<keyword id="KW-0449">Lipoprotein</keyword>
<keyword id="KW-0472">Membrane</keyword>
<keyword id="KW-0519">Myristate</keyword>
<keyword id="KW-0597">Phosphoprotein</keyword>
<keyword id="KW-1185">Reference proteome</keyword>
<sequence>MGSCWSCLDRDSVPHNHPTKFKVTNVDDEGVELGSGVMELTQSELVLHLHQREAVRWPYLCLRRYGYDSNLFSFESGRRCQTGQGIFAFKCSRAEDIFNLLQDLMQCNSINVTEEPVIITRSSHPPELDLPRGPPQPAGYTVSGFSNGFPGCPGEGPRFSSAPRRPSTSSLRHPSPGEESTHTLIASEEQSHTYVNTPTGDEDGRSRHCLQPLPEGRVPLPAQTQGSDQRDPQVLLQPGQVKFVLGPTPARRQVMKCQSLCPGMQDPPHHNNNEGPSECPAQPKCTYENVSGGLQQGAGWRLSPEERGWSGLAHRRAALLHYENLPPLPPVWESQGQQPGGEAGDDGDSRDGLTPSSNGFPDGEEDETPLQKPTSTRASARSHSGFPVPLTRRRGSPRVFNFDFRRQGPEPPRQLNYIQVELKGWGTARPKGPQNPSVSGAPGPTPHPVRSSDSYAVIDLKKTAAMSDLQRALPRDDGAVRKTRHNSTDLPL</sequence>
<dbReference type="EMBL" id="AF456480">
    <property type="protein sequence ID" value="AAO15529.1"/>
    <property type="molecule type" value="Genomic_DNA"/>
</dbReference>
<dbReference type="EMBL" id="BC014819">
    <property type="protein sequence ID" value="AAH14819.1"/>
    <property type="molecule type" value="mRNA"/>
</dbReference>
<dbReference type="CCDS" id="CCDS28854.1"/>
<dbReference type="RefSeq" id="NP_001406136.1">
    <property type="nucleotide sequence ID" value="NM_001419207.1"/>
</dbReference>
<dbReference type="RefSeq" id="NP_001406137.1">
    <property type="nucleotide sequence ID" value="NM_001419208.1"/>
</dbReference>
<dbReference type="RefSeq" id="NP_659188.1">
    <property type="nucleotide sequence ID" value="NM_144939.3"/>
</dbReference>
<dbReference type="RefSeq" id="XP_006523531.1">
    <property type="nucleotide sequence ID" value="XM_006523468.1"/>
</dbReference>
<dbReference type="RefSeq" id="XP_006523532.1">
    <property type="nucleotide sequence ID" value="XM_006523469.4"/>
</dbReference>
<dbReference type="SMR" id="Q91WJ0"/>
<dbReference type="BioGRID" id="223728">
    <property type="interactions" value="2"/>
</dbReference>
<dbReference type="FunCoup" id="Q91WJ0">
    <property type="interactions" value="706"/>
</dbReference>
<dbReference type="IntAct" id="Q91WJ0">
    <property type="interactions" value="1"/>
</dbReference>
<dbReference type="STRING" id="10090.ENSMUSP00000108921"/>
<dbReference type="GlyGen" id="Q91WJ0">
    <property type="glycosylation" value="3 sites, 1 O-linked glycan (1 site)"/>
</dbReference>
<dbReference type="iPTMnet" id="Q91WJ0"/>
<dbReference type="PhosphoSitePlus" id="Q91WJ0"/>
<dbReference type="SwissPalm" id="Q91WJ0"/>
<dbReference type="PaxDb" id="10090-ENSMUSP00000108921"/>
<dbReference type="PeptideAtlas" id="Q91WJ0"/>
<dbReference type="ProteomicsDB" id="271607"/>
<dbReference type="Antibodypedia" id="30086">
    <property type="antibodies" value="208 antibodies from 28 providers"/>
</dbReference>
<dbReference type="DNASU" id="107971"/>
<dbReference type="Ensembl" id="ENSMUST00000113296.8">
    <property type="protein sequence ID" value="ENSMUSP00000108921.2"/>
    <property type="gene ID" value="ENSMUSG00000023266.12"/>
</dbReference>
<dbReference type="GeneID" id="107971"/>
<dbReference type="KEGG" id="mmu:107971"/>
<dbReference type="UCSC" id="uc008cvz.1">
    <property type="organism name" value="mouse"/>
</dbReference>
<dbReference type="AGR" id="MGI:2135965"/>
<dbReference type="CTD" id="10817"/>
<dbReference type="MGI" id="MGI:2135965">
    <property type="gene designation" value="Frs3"/>
</dbReference>
<dbReference type="VEuPathDB" id="HostDB:ENSMUSG00000023266"/>
<dbReference type="eggNOG" id="KOG4047">
    <property type="taxonomic scope" value="Eukaryota"/>
</dbReference>
<dbReference type="GeneTree" id="ENSGT00940000159495"/>
<dbReference type="HOGENOM" id="CLU_022374_0_0_1"/>
<dbReference type="InParanoid" id="Q91WJ0"/>
<dbReference type="OMA" id="CPEQPRQ"/>
<dbReference type="OrthoDB" id="8817077at2759"/>
<dbReference type="PhylomeDB" id="Q91WJ0"/>
<dbReference type="TreeFam" id="TF324994"/>
<dbReference type="Reactome" id="R-MMU-5654693">
    <property type="pathway name" value="FRS-mediated FGFR1 signaling"/>
</dbReference>
<dbReference type="Reactome" id="R-MMU-5654700">
    <property type="pathway name" value="FRS-mediated FGFR2 signaling"/>
</dbReference>
<dbReference type="Reactome" id="R-MMU-5654706">
    <property type="pathway name" value="FRS-mediated FGFR3 signaling"/>
</dbReference>
<dbReference type="Reactome" id="R-MMU-5654712">
    <property type="pathway name" value="FRS-mediated FGFR4 signaling"/>
</dbReference>
<dbReference type="Reactome" id="R-MMU-5673001">
    <property type="pathway name" value="RAF/MAP kinase cascade"/>
</dbReference>
<dbReference type="Reactome" id="R-MMU-9696270">
    <property type="pathway name" value="RND2 GTPase cycle"/>
</dbReference>
<dbReference type="Reactome" id="R-MMU-9696273">
    <property type="pathway name" value="RND1 GTPase cycle"/>
</dbReference>
<dbReference type="BioGRID-ORCS" id="107971">
    <property type="hits" value="2 hits in 76 CRISPR screens"/>
</dbReference>
<dbReference type="ChiTaRS" id="Frs3">
    <property type="organism name" value="mouse"/>
</dbReference>
<dbReference type="PRO" id="PR:Q91WJ0"/>
<dbReference type="Proteomes" id="UP000000589">
    <property type="component" value="Chromosome 17"/>
</dbReference>
<dbReference type="RNAct" id="Q91WJ0">
    <property type="molecule type" value="protein"/>
</dbReference>
<dbReference type="Bgee" id="ENSMUSG00000023266">
    <property type="expression patterns" value="Expressed in retinal neural layer and 157 other cell types or tissues"/>
</dbReference>
<dbReference type="ExpressionAtlas" id="Q91WJ0">
    <property type="expression patterns" value="baseline and differential"/>
</dbReference>
<dbReference type="GO" id="GO:0016020">
    <property type="term" value="C:membrane"/>
    <property type="evidence" value="ECO:0007669"/>
    <property type="project" value="UniProtKB-SubCell"/>
</dbReference>
<dbReference type="GO" id="GO:0005104">
    <property type="term" value="F:fibroblast growth factor receptor binding"/>
    <property type="evidence" value="ECO:0000266"/>
    <property type="project" value="MGI"/>
</dbReference>
<dbReference type="GO" id="GO:0042802">
    <property type="term" value="F:identical protein binding"/>
    <property type="evidence" value="ECO:0007669"/>
    <property type="project" value="Ensembl"/>
</dbReference>
<dbReference type="GO" id="GO:0008543">
    <property type="term" value="P:fibroblast growth factor receptor signaling pathway"/>
    <property type="evidence" value="ECO:0000266"/>
    <property type="project" value="MGI"/>
</dbReference>
<dbReference type="CDD" id="cd01202">
    <property type="entry name" value="PTB_FRS2"/>
    <property type="match status" value="1"/>
</dbReference>
<dbReference type="FunFam" id="2.30.29.30:FF:000169">
    <property type="entry name" value="Fibroblast growth factor receptor substrate 2"/>
    <property type="match status" value="1"/>
</dbReference>
<dbReference type="Gene3D" id="2.30.29.30">
    <property type="entry name" value="Pleckstrin-homology domain (PH domain)/Phosphotyrosine-binding domain (PTB)"/>
    <property type="match status" value="1"/>
</dbReference>
<dbReference type="InterPro" id="IPR050996">
    <property type="entry name" value="Docking_Protein_DOK"/>
</dbReference>
<dbReference type="InterPro" id="IPR038742">
    <property type="entry name" value="FRS2_PTB"/>
</dbReference>
<dbReference type="InterPro" id="IPR002404">
    <property type="entry name" value="IRS_PTB"/>
</dbReference>
<dbReference type="InterPro" id="IPR011993">
    <property type="entry name" value="PH-like_dom_sf"/>
</dbReference>
<dbReference type="PANTHER" id="PTHR21258">
    <property type="entry name" value="DOCKING PROTEIN RELATED"/>
    <property type="match status" value="1"/>
</dbReference>
<dbReference type="PANTHER" id="PTHR21258:SF39">
    <property type="entry name" value="FIBROBLAST GROWTH FACTOR RECEPTOR SUBSTRATE 3"/>
    <property type="match status" value="1"/>
</dbReference>
<dbReference type="Pfam" id="PF02174">
    <property type="entry name" value="IRS"/>
    <property type="match status" value="1"/>
</dbReference>
<dbReference type="SMART" id="SM01244">
    <property type="entry name" value="IRS"/>
    <property type="match status" value="1"/>
</dbReference>
<dbReference type="SMART" id="SM00310">
    <property type="entry name" value="PTBI"/>
    <property type="match status" value="1"/>
</dbReference>
<dbReference type="SUPFAM" id="SSF50729">
    <property type="entry name" value="PH domain-like"/>
    <property type="match status" value="1"/>
</dbReference>
<dbReference type="PROSITE" id="PS51064">
    <property type="entry name" value="IRS_PTB"/>
    <property type="match status" value="1"/>
</dbReference>
<evidence type="ECO:0000250" key="1"/>
<evidence type="ECO:0000255" key="2"/>
<evidence type="ECO:0000255" key="3">
    <source>
        <dbReference type="PROSITE-ProRule" id="PRU00389"/>
    </source>
</evidence>
<evidence type="ECO:0000256" key="4">
    <source>
        <dbReference type="SAM" id="MobiDB-lite"/>
    </source>
</evidence>
<evidence type="ECO:0000269" key="5">
    <source>
    </source>
</evidence>
<organism>
    <name type="scientific">Mus musculus</name>
    <name type="common">Mouse</name>
    <dbReference type="NCBI Taxonomy" id="10090"/>
    <lineage>
        <taxon>Eukaryota</taxon>
        <taxon>Metazoa</taxon>
        <taxon>Chordata</taxon>
        <taxon>Craniata</taxon>
        <taxon>Vertebrata</taxon>
        <taxon>Euteleostomi</taxon>
        <taxon>Mammalia</taxon>
        <taxon>Eutheria</taxon>
        <taxon>Euarchontoglires</taxon>
        <taxon>Glires</taxon>
        <taxon>Rodentia</taxon>
        <taxon>Myomorpha</taxon>
        <taxon>Muroidea</taxon>
        <taxon>Muridae</taxon>
        <taxon>Murinae</taxon>
        <taxon>Mus</taxon>
        <taxon>Mus</taxon>
    </lineage>
</organism>
<name>FRS3_MOUSE</name>
<accession>Q91WJ0</accession>
<feature type="initiator methionine" description="Removed" evidence="2">
    <location>
        <position position="1"/>
    </location>
</feature>
<feature type="chain" id="PRO_0000087347" description="Fibroblast growth factor receptor substrate 3">
    <location>
        <begin position="2"/>
        <end position="492"/>
    </location>
</feature>
<feature type="domain" description="IRS-type PTB" evidence="3">
    <location>
        <begin position="13"/>
        <end position="115"/>
    </location>
</feature>
<feature type="region of interest" description="Disordered" evidence="4">
    <location>
        <begin position="122"/>
        <end position="230"/>
    </location>
</feature>
<feature type="region of interest" description="Disordered" evidence="4">
    <location>
        <begin position="328"/>
        <end position="414"/>
    </location>
</feature>
<feature type="region of interest" description="Disordered" evidence="4">
    <location>
        <begin position="426"/>
        <end position="454"/>
    </location>
</feature>
<feature type="region of interest" description="Disordered" evidence="4">
    <location>
        <begin position="469"/>
        <end position="492"/>
    </location>
</feature>
<feature type="compositionally biased region" description="Polar residues" evidence="4">
    <location>
        <begin position="371"/>
        <end position="382"/>
    </location>
</feature>
<feature type="lipid moiety-binding region" description="N-myristoyl glycine" evidence="2">
    <location>
        <position position="2"/>
    </location>
</feature>
<protein>
    <recommendedName>
        <fullName>Fibroblast growth factor receptor substrate 3</fullName>
        <shortName>FGFR substrate 3</shortName>
    </recommendedName>
    <alternativeName>
        <fullName>FRS2-beta</fullName>
    </alternativeName>
</protein>
<reference key="1">
    <citation type="journal article" date="2003" name="Mol. Biol. Rep.">
        <title>Genomic organization and comparative sequence analysis of the mouse and human FRS2, FRS3 genes.</title>
        <authorList>
            <person name="Zhou L."/>
            <person name="McDougall K."/>
            <person name="Kubu C.J."/>
            <person name="Verdi J.M."/>
            <person name="Meakin S.O."/>
        </authorList>
    </citation>
    <scope>NUCLEOTIDE SEQUENCE [GENOMIC DNA]</scope>
    <source>
        <strain>129/SvJ</strain>
    </source>
</reference>
<reference key="2">
    <citation type="journal article" date="2004" name="Genome Res.">
        <title>The status, quality, and expansion of the NIH full-length cDNA project: the Mammalian Gene Collection (MGC).</title>
        <authorList>
            <consortium name="The MGC Project Team"/>
        </authorList>
    </citation>
    <scope>NUCLEOTIDE SEQUENCE [LARGE SCALE MRNA]</scope>
    <source>
        <strain>C57BL/6J</strain>
        <tissue>Eye</tissue>
    </source>
</reference>
<reference key="3">
    <citation type="journal article" date="2000" name="Mol. Cell. Biol.">
        <title>FRS2 proteins recruit intracellular signaling pathways by binding to diverse targets on fibroblast growth factor and nerve growth factor receptors.</title>
        <authorList>
            <person name="Ong S.-H."/>
            <person name="Guy G.R."/>
            <person name="Hadari Y.R."/>
            <person name="Laks S."/>
            <person name="Gotoh N."/>
            <person name="Schlessinger J."/>
            <person name="Lax I."/>
        </authorList>
    </citation>
    <scope>INTERACTION WITH FGFR1 AND NTRK1</scope>
</reference>
<reference key="4">
    <citation type="journal article" date="2007" name="Cell. Signal.">
        <title>UNC-51-like kinase regulation of fibroblast growth factor receptor substrate 2/3.</title>
        <authorList>
            <person name="Avery A.W."/>
            <person name="Figueroa C."/>
            <person name="Vojtek A.B."/>
        </authorList>
    </citation>
    <scope>PHOSPHORYLATION BY ULK2</scope>
</reference>
<gene>
    <name type="primary">Frs3</name>
    <name type="synonym">Frs2b</name>
</gene>
<comment type="function">
    <text>Adapter protein that links FGF and NGF receptors to downstream signaling pathways. Involved in the activation of MAP kinases. Down-regulates ERK2 signaling by interfering with the phosphorylation and nuclear translocation of ERK2.</text>
</comment>
<comment type="subunit">
    <text evidence="1">Binds NGFR, GRB2, PTPN11 and ERK2 (By similarity). Binds FGFR1 and NTRK1.</text>
</comment>
<comment type="subcellular location">
    <subcellularLocation>
        <location>Membrane</location>
        <topology>Lipid-anchor</topology>
    </subcellularLocation>
</comment>
<comment type="PTM">
    <text evidence="5">Phosphorylated on tyrosine residues upon stimulation by BFGF or NGFB. Phosphorylated by ULK2 in vitro.</text>
</comment>